<comment type="function">
    <text evidence="1">Catalyzes the 2-thiolation of uridine at the wobble position (U34) of tRNA, leading to the formation of s(2)U34.</text>
</comment>
<comment type="catalytic activity">
    <reaction evidence="1">
        <text>S-sulfanyl-L-cysteinyl-[protein] + uridine(34) in tRNA + AH2 + ATP = 2-thiouridine(34) in tRNA + L-cysteinyl-[protein] + A + AMP + diphosphate + H(+)</text>
        <dbReference type="Rhea" id="RHEA:47032"/>
        <dbReference type="Rhea" id="RHEA-COMP:10131"/>
        <dbReference type="Rhea" id="RHEA-COMP:11726"/>
        <dbReference type="Rhea" id="RHEA-COMP:11727"/>
        <dbReference type="Rhea" id="RHEA-COMP:11728"/>
        <dbReference type="ChEBI" id="CHEBI:13193"/>
        <dbReference type="ChEBI" id="CHEBI:15378"/>
        <dbReference type="ChEBI" id="CHEBI:17499"/>
        <dbReference type="ChEBI" id="CHEBI:29950"/>
        <dbReference type="ChEBI" id="CHEBI:30616"/>
        <dbReference type="ChEBI" id="CHEBI:33019"/>
        <dbReference type="ChEBI" id="CHEBI:61963"/>
        <dbReference type="ChEBI" id="CHEBI:65315"/>
        <dbReference type="ChEBI" id="CHEBI:87170"/>
        <dbReference type="ChEBI" id="CHEBI:456215"/>
        <dbReference type="EC" id="2.8.1.13"/>
    </reaction>
</comment>
<comment type="subcellular location">
    <subcellularLocation>
        <location evidence="1">Cytoplasm</location>
    </subcellularLocation>
</comment>
<comment type="similarity">
    <text evidence="1">Belongs to the MnmA/TRMU family.</text>
</comment>
<comment type="sequence caution" evidence="2">
    <conflict type="erroneous initiation">
        <sequence resource="EMBL-CDS" id="ABE41181"/>
    </conflict>
</comment>
<gene>
    <name evidence="1" type="primary">mnmA</name>
    <name type="ordered locus">RPD_3962</name>
</gene>
<dbReference type="EC" id="2.8.1.13" evidence="1"/>
<dbReference type="EMBL" id="CP000283">
    <property type="protein sequence ID" value="ABE41181.1"/>
    <property type="status" value="ALT_INIT"/>
    <property type="molecule type" value="Genomic_DNA"/>
</dbReference>
<dbReference type="SMR" id="Q131Q8"/>
<dbReference type="STRING" id="316057.RPD_3962"/>
<dbReference type="KEGG" id="rpd:RPD_3962"/>
<dbReference type="eggNOG" id="COG0482">
    <property type="taxonomic scope" value="Bacteria"/>
</dbReference>
<dbReference type="HOGENOM" id="CLU_035188_0_1_5"/>
<dbReference type="Proteomes" id="UP000001818">
    <property type="component" value="Chromosome"/>
</dbReference>
<dbReference type="GO" id="GO:0005737">
    <property type="term" value="C:cytoplasm"/>
    <property type="evidence" value="ECO:0007669"/>
    <property type="project" value="UniProtKB-SubCell"/>
</dbReference>
<dbReference type="GO" id="GO:0005524">
    <property type="term" value="F:ATP binding"/>
    <property type="evidence" value="ECO:0007669"/>
    <property type="project" value="UniProtKB-KW"/>
</dbReference>
<dbReference type="GO" id="GO:0000049">
    <property type="term" value="F:tRNA binding"/>
    <property type="evidence" value="ECO:0007669"/>
    <property type="project" value="UniProtKB-KW"/>
</dbReference>
<dbReference type="GO" id="GO:0103016">
    <property type="term" value="F:tRNA-uridine 2-sulfurtransferase activity"/>
    <property type="evidence" value="ECO:0007669"/>
    <property type="project" value="UniProtKB-EC"/>
</dbReference>
<dbReference type="GO" id="GO:0002143">
    <property type="term" value="P:tRNA wobble position uridine thiolation"/>
    <property type="evidence" value="ECO:0007669"/>
    <property type="project" value="TreeGrafter"/>
</dbReference>
<dbReference type="CDD" id="cd01998">
    <property type="entry name" value="MnmA_TRMU-like"/>
    <property type="match status" value="1"/>
</dbReference>
<dbReference type="FunFam" id="2.30.30.280:FF:000001">
    <property type="entry name" value="tRNA-specific 2-thiouridylase MnmA"/>
    <property type="match status" value="1"/>
</dbReference>
<dbReference type="FunFam" id="3.40.50.620:FF:000115">
    <property type="entry name" value="tRNA-specific 2-thiouridylase MnmA"/>
    <property type="match status" value="1"/>
</dbReference>
<dbReference type="Gene3D" id="2.30.30.280">
    <property type="entry name" value="Adenine nucleotide alpha hydrolases-like domains"/>
    <property type="match status" value="1"/>
</dbReference>
<dbReference type="Gene3D" id="3.40.50.620">
    <property type="entry name" value="HUPs"/>
    <property type="match status" value="1"/>
</dbReference>
<dbReference type="Gene3D" id="2.40.30.10">
    <property type="entry name" value="Translation factors"/>
    <property type="match status" value="1"/>
</dbReference>
<dbReference type="HAMAP" id="MF_00144">
    <property type="entry name" value="tRNA_thiouridyl_MnmA"/>
    <property type="match status" value="1"/>
</dbReference>
<dbReference type="InterPro" id="IPR004506">
    <property type="entry name" value="MnmA-like"/>
</dbReference>
<dbReference type="InterPro" id="IPR046885">
    <property type="entry name" value="MnmA-like_C"/>
</dbReference>
<dbReference type="InterPro" id="IPR046884">
    <property type="entry name" value="MnmA-like_central"/>
</dbReference>
<dbReference type="InterPro" id="IPR023382">
    <property type="entry name" value="MnmA-like_central_sf"/>
</dbReference>
<dbReference type="InterPro" id="IPR014729">
    <property type="entry name" value="Rossmann-like_a/b/a_fold"/>
</dbReference>
<dbReference type="NCBIfam" id="NF001138">
    <property type="entry name" value="PRK00143.1"/>
    <property type="match status" value="1"/>
</dbReference>
<dbReference type="NCBIfam" id="TIGR00420">
    <property type="entry name" value="trmU"/>
    <property type="match status" value="1"/>
</dbReference>
<dbReference type="PANTHER" id="PTHR11933:SF5">
    <property type="entry name" value="MITOCHONDRIAL TRNA-SPECIFIC 2-THIOURIDYLASE 1"/>
    <property type="match status" value="1"/>
</dbReference>
<dbReference type="PANTHER" id="PTHR11933">
    <property type="entry name" value="TRNA 5-METHYLAMINOMETHYL-2-THIOURIDYLATE -METHYLTRANSFERASE"/>
    <property type="match status" value="1"/>
</dbReference>
<dbReference type="Pfam" id="PF03054">
    <property type="entry name" value="tRNA_Me_trans"/>
    <property type="match status" value="1"/>
</dbReference>
<dbReference type="Pfam" id="PF20258">
    <property type="entry name" value="tRNA_Me_trans_C"/>
    <property type="match status" value="1"/>
</dbReference>
<dbReference type="Pfam" id="PF20259">
    <property type="entry name" value="tRNA_Me_trans_M"/>
    <property type="match status" value="1"/>
</dbReference>
<dbReference type="SUPFAM" id="SSF52402">
    <property type="entry name" value="Adenine nucleotide alpha hydrolases-like"/>
    <property type="match status" value="1"/>
</dbReference>
<name>MNMA_RHOPS</name>
<reference key="1">
    <citation type="submission" date="2006-03" db="EMBL/GenBank/DDBJ databases">
        <title>Complete sequence of Rhodopseudomonas palustris BisB5.</title>
        <authorList>
            <consortium name="US DOE Joint Genome Institute"/>
            <person name="Copeland A."/>
            <person name="Lucas S."/>
            <person name="Lapidus A."/>
            <person name="Barry K."/>
            <person name="Detter J.C."/>
            <person name="Glavina del Rio T."/>
            <person name="Hammon N."/>
            <person name="Israni S."/>
            <person name="Dalin E."/>
            <person name="Tice H."/>
            <person name="Pitluck S."/>
            <person name="Chain P."/>
            <person name="Malfatti S."/>
            <person name="Shin M."/>
            <person name="Vergez L."/>
            <person name="Schmutz J."/>
            <person name="Larimer F."/>
            <person name="Land M."/>
            <person name="Hauser L."/>
            <person name="Pelletier D.A."/>
            <person name="Kyrpides N."/>
            <person name="Lykidis A."/>
            <person name="Oda Y."/>
            <person name="Harwood C.S."/>
            <person name="Richardson P."/>
        </authorList>
    </citation>
    <scope>NUCLEOTIDE SEQUENCE [LARGE SCALE GENOMIC DNA]</scope>
    <source>
        <strain>BisB5</strain>
    </source>
</reference>
<protein>
    <recommendedName>
        <fullName evidence="1">tRNA-specific 2-thiouridylase MnmA</fullName>
        <ecNumber evidence="1">2.8.1.13</ecNumber>
    </recommendedName>
</protein>
<evidence type="ECO:0000255" key="1">
    <source>
        <dbReference type="HAMAP-Rule" id="MF_00144"/>
    </source>
</evidence>
<evidence type="ECO:0000305" key="2"/>
<organism>
    <name type="scientific">Rhodopseudomonas palustris (strain BisB5)</name>
    <dbReference type="NCBI Taxonomy" id="316057"/>
    <lineage>
        <taxon>Bacteria</taxon>
        <taxon>Pseudomonadati</taxon>
        <taxon>Pseudomonadota</taxon>
        <taxon>Alphaproteobacteria</taxon>
        <taxon>Hyphomicrobiales</taxon>
        <taxon>Nitrobacteraceae</taxon>
        <taxon>Rhodopseudomonas</taxon>
    </lineage>
</organism>
<keyword id="KW-0067">ATP-binding</keyword>
<keyword id="KW-0963">Cytoplasm</keyword>
<keyword id="KW-1015">Disulfide bond</keyword>
<keyword id="KW-0547">Nucleotide-binding</keyword>
<keyword id="KW-0694">RNA-binding</keyword>
<keyword id="KW-0808">Transferase</keyword>
<keyword id="KW-0819">tRNA processing</keyword>
<keyword id="KW-0820">tRNA-binding</keyword>
<proteinExistence type="inferred from homology"/>
<feature type="chain" id="PRO_0000349774" description="tRNA-specific 2-thiouridylase MnmA">
    <location>
        <begin position="1"/>
        <end position="398"/>
    </location>
</feature>
<feature type="region of interest" description="Interaction with tRNA" evidence="1">
    <location>
        <begin position="160"/>
        <end position="162"/>
    </location>
</feature>
<feature type="active site" description="Nucleophile" evidence="1">
    <location>
        <position position="113"/>
    </location>
</feature>
<feature type="active site" description="Cysteine persulfide intermediate" evidence="1">
    <location>
        <position position="210"/>
    </location>
</feature>
<feature type="binding site" evidence="1">
    <location>
        <begin position="19"/>
        <end position="26"/>
    </location>
    <ligand>
        <name>ATP</name>
        <dbReference type="ChEBI" id="CHEBI:30616"/>
    </ligand>
</feature>
<feature type="binding site" evidence="1">
    <location>
        <position position="45"/>
    </location>
    <ligand>
        <name>ATP</name>
        <dbReference type="ChEBI" id="CHEBI:30616"/>
    </ligand>
</feature>
<feature type="binding site" evidence="1">
    <location>
        <position position="137"/>
    </location>
    <ligand>
        <name>ATP</name>
        <dbReference type="ChEBI" id="CHEBI:30616"/>
    </ligand>
</feature>
<feature type="site" description="Interaction with tRNA" evidence="1">
    <location>
        <position position="138"/>
    </location>
</feature>
<feature type="site" description="Interaction with tRNA" evidence="1">
    <location>
        <position position="352"/>
    </location>
</feature>
<feature type="disulfide bond" description="Alternate" evidence="1">
    <location>
        <begin position="113"/>
        <end position="210"/>
    </location>
</feature>
<sequence length="398" mass="43061">MLNSLDLEGRPQDTRVVVAMSGGVDSSATAALLKSQGYDVVGITLQLYDHGAATHRKGACCAGQDIHDARAVAERIGIPHYVLDYESRFRESVIDSFADSYALGETPVPCIECNRSVKFRDLLATARELGASALATGHYVSSRRLDDGSRALICAADRDRDQSYFLFATTREQLDFLRFPLGDMTKPQTRELARQFGLSVADKHDSQDICFVPTGRYTDVVERLKPNAMEPGEIVDLNGHVLGSHPGIVHFTVGQRRGLGIASRAPLYVLRLDAAHRRVVVGPREALRMERIVLRDVNWIGDGAIDQAVGDGLELFVRVRSTRAPQPAWLRAVGGGYEVELVAGEEGVSPGQACVFYDAADGQARVLGGGFIKSAAPRWSADGVRDDAASPALAAMRG</sequence>
<accession>Q131Q8</accession>